<proteinExistence type="evidence at protein level"/>
<feature type="chain" id="PRO_0000132216" description="Small ribosomal subunit protein uS13">
    <location>
        <begin position="1"/>
        <end position="152"/>
    </location>
</feature>
<protein>
    <recommendedName>
        <fullName evidence="3">Small ribosomal subunit protein uS13</fullName>
    </recommendedName>
    <alternativeName>
        <fullName>40S ribosomal protein S18</fullName>
    </alternativeName>
</protein>
<reference key="1">
    <citation type="journal article" date="2002" name="Nat. Genet.">
        <title>Insertional mutagenesis in zebrafish rapidly identifies genes essential for early vertebrate development.</title>
        <authorList>
            <person name="Golling G."/>
            <person name="Amsterdam A."/>
            <person name="Sun Z."/>
            <person name="Antonelli M."/>
            <person name="Maldonado E."/>
            <person name="Chen W."/>
            <person name="Burgess S."/>
            <person name="Haldi M."/>
            <person name="Artzt K."/>
            <person name="Farrington S."/>
            <person name="Lin S.-Y."/>
            <person name="Nissen R.M."/>
            <person name="Hopkins N."/>
        </authorList>
    </citation>
    <scope>NUCLEOTIDE SEQUENCE [LARGE SCALE MRNA]</scope>
    <scope>FUNCTION</scope>
    <scope>DISRUPTION PHENOTYPE</scope>
    <source>
        <tissue>Embryo</tissue>
    </source>
</reference>
<reference key="2">
    <citation type="submission" date="2003-11" db="EMBL/GenBank/DDBJ databases">
        <authorList>
            <consortium name="NIH - Zebrafish Gene Collection (ZGC) project"/>
        </authorList>
    </citation>
    <scope>NUCLEOTIDE SEQUENCE [LARGE SCALE MRNA]</scope>
    <source>
        <strain>AB</strain>
    </source>
</reference>
<reference key="3">
    <citation type="journal article" date="2000" name="J. Immunol.">
        <title>Conservation of Mhc class III region synteny between zebrafish and human as determined by radiation hybrid mapping.</title>
        <authorList>
            <person name="Sueltmann H."/>
            <person name="Sato A."/>
            <person name="Murray B.W."/>
            <person name="Takezaki N."/>
            <person name="Geisler R."/>
            <person name="Rauch G.-J."/>
            <person name="Klein J."/>
        </authorList>
    </citation>
    <scope>NUCLEOTIDE SEQUENCE [MRNA] OF 23-148</scope>
</reference>
<keyword id="KW-0002">3D-structure</keyword>
<keyword id="KW-0963">Cytoplasm</keyword>
<keyword id="KW-0217">Developmental protein</keyword>
<keyword id="KW-1185">Reference proteome</keyword>
<keyword id="KW-0687">Ribonucleoprotein</keyword>
<keyword id="KW-0689">Ribosomal protein</keyword>
<keyword id="KW-0694">RNA-binding</keyword>
<keyword id="KW-0699">rRNA-binding</keyword>
<name>RS18_DANRE</name>
<sequence>MSLVIPEKFQHILRVLNTNIDGRRKIAFAITAIKGVGRRYAHVVLRKADIDLNKRAGELTEDEVERVVTIMQNPRQYKIPDWFLNRQKDIKDGKYSQVLANGLDNKLREDLERLKKIRAHRGLRHFWGLRVRGQHTKTTGRRGRTVGVSKKK</sequence>
<dbReference type="EMBL" id="AY099517">
    <property type="protein sequence ID" value="AAM28205.1"/>
    <property type="molecule type" value="mRNA"/>
</dbReference>
<dbReference type="EMBL" id="BC062289">
    <property type="protein sequence ID" value="AAH62289.1"/>
    <property type="molecule type" value="mRNA"/>
</dbReference>
<dbReference type="EMBL" id="AF210641">
    <property type="protein sequence ID" value="AAF70446.1"/>
    <property type="molecule type" value="mRNA"/>
</dbReference>
<dbReference type="RefSeq" id="NP_001410479.1">
    <property type="nucleotide sequence ID" value="NM_001423550.1"/>
</dbReference>
<dbReference type="RefSeq" id="NP_775341.1">
    <property type="nucleotide sequence ID" value="NM_173234.1"/>
</dbReference>
<dbReference type="PDB" id="7OYA">
    <property type="method" value="EM"/>
    <property type="resolution" value="3.20 A"/>
    <property type="chains" value="S2=1-152"/>
</dbReference>
<dbReference type="PDB" id="7OYB">
    <property type="method" value="EM"/>
    <property type="resolution" value="2.40 A"/>
    <property type="chains" value="S2=1-152"/>
</dbReference>
<dbReference type="PDBsum" id="7OYA"/>
<dbReference type="PDBsum" id="7OYB"/>
<dbReference type="EMDB" id="EMD-13111"/>
<dbReference type="EMDB" id="EMD-13112"/>
<dbReference type="SMR" id="Q8JGS9"/>
<dbReference type="FunCoup" id="Q8JGS9">
    <property type="interactions" value="2166"/>
</dbReference>
<dbReference type="STRING" id="7955.ENSDARP00000133054"/>
<dbReference type="PaxDb" id="7955-ENSDARP00000005719"/>
<dbReference type="Ensembl" id="ENSDART00000167971">
    <property type="protein sequence ID" value="ENSDARP00000133054"/>
    <property type="gene ID" value="ENSDARG00000100392"/>
</dbReference>
<dbReference type="GeneID" id="192300"/>
<dbReference type="AGR" id="ZFIN:ZDB-GENE-020419-20"/>
<dbReference type="CTD" id="6222"/>
<dbReference type="ZFIN" id="ZDB-GENE-020419-20">
    <property type="gene designation" value="rps18"/>
</dbReference>
<dbReference type="eggNOG" id="KOG3311">
    <property type="taxonomic scope" value="Eukaryota"/>
</dbReference>
<dbReference type="HOGENOM" id="CLU_103849_0_1_1"/>
<dbReference type="InParanoid" id="Q8JGS9"/>
<dbReference type="OMA" id="SYKGVRH"/>
<dbReference type="OrthoDB" id="1702480at2759"/>
<dbReference type="PhylomeDB" id="Q8JGS9"/>
<dbReference type="TreeFam" id="TF317649"/>
<dbReference type="Reactome" id="R-DRE-156827">
    <property type="pathway name" value="L13a-mediated translational silencing of Ceruloplasmin expression"/>
</dbReference>
<dbReference type="Reactome" id="R-DRE-1799339">
    <property type="pathway name" value="SRP-dependent cotranslational protein targeting to membrane"/>
</dbReference>
<dbReference type="Reactome" id="R-DRE-72689">
    <property type="pathway name" value="Formation of a pool of free 40S subunits"/>
</dbReference>
<dbReference type="Reactome" id="R-DRE-72695">
    <property type="pathway name" value="Formation of the ternary complex, and subsequently, the 43S complex"/>
</dbReference>
<dbReference type="Reactome" id="R-DRE-72702">
    <property type="pathway name" value="Ribosomal scanning and start codon recognition"/>
</dbReference>
<dbReference type="Reactome" id="R-DRE-975956">
    <property type="pathway name" value="Nonsense Mediated Decay (NMD) independent of the Exon Junction Complex (EJC)"/>
</dbReference>
<dbReference type="Reactome" id="R-DRE-975957">
    <property type="pathway name" value="Nonsense Mediated Decay (NMD) enhanced by the Exon Junction Complex (EJC)"/>
</dbReference>
<dbReference type="PRO" id="PR:Q8JGS9"/>
<dbReference type="Proteomes" id="UP000000437">
    <property type="component" value="Chromosome 19"/>
</dbReference>
<dbReference type="Bgee" id="ENSDARG00000100392">
    <property type="expression patterns" value="Expressed in spleen and 27 other cell types or tissues"/>
</dbReference>
<dbReference type="ExpressionAtlas" id="Q8JGS9">
    <property type="expression patterns" value="baseline"/>
</dbReference>
<dbReference type="GO" id="GO:0005829">
    <property type="term" value="C:cytosol"/>
    <property type="evidence" value="ECO:0000318"/>
    <property type="project" value="GO_Central"/>
</dbReference>
<dbReference type="GO" id="GO:0015935">
    <property type="term" value="C:small ribosomal subunit"/>
    <property type="evidence" value="ECO:0000318"/>
    <property type="project" value="GO_Central"/>
</dbReference>
<dbReference type="GO" id="GO:0019843">
    <property type="term" value="F:rRNA binding"/>
    <property type="evidence" value="ECO:0007669"/>
    <property type="project" value="UniProtKB-KW"/>
</dbReference>
<dbReference type="GO" id="GO:0003735">
    <property type="term" value="F:structural constituent of ribosome"/>
    <property type="evidence" value="ECO:0007669"/>
    <property type="project" value="InterPro"/>
</dbReference>
<dbReference type="GO" id="GO:0051726">
    <property type="term" value="P:regulation of cell cycle"/>
    <property type="evidence" value="ECO:0000315"/>
    <property type="project" value="ZFIN"/>
</dbReference>
<dbReference type="GO" id="GO:0006412">
    <property type="term" value="P:translation"/>
    <property type="evidence" value="ECO:0007669"/>
    <property type="project" value="InterPro"/>
</dbReference>
<dbReference type="FunFam" id="1.10.8.50:FF:000002">
    <property type="entry name" value="40S ribosomal protein S18"/>
    <property type="match status" value="1"/>
</dbReference>
<dbReference type="FunFam" id="4.10.910.10:FF:000002">
    <property type="entry name" value="40S ribosomal protein S18"/>
    <property type="match status" value="1"/>
</dbReference>
<dbReference type="Gene3D" id="1.10.8.50">
    <property type="match status" value="1"/>
</dbReference>
<dbReference type="Gene3D" id="4.10.910.10">
    <property type="entry name" value="30s ribosomal protein s13, domain 2"/>
    <property type="match status" value="1"/>
</dbReference>
<dbReference type="HAMAP" id="MF_01315">
    <property type="entry name" value="Ribosomal_uS13"/>
    <property type="match status" value="1"/>
</dbReference>
<dbReference type="InterPro" id="IPR027437">
    <property type="entry name" value="Rbsml_uS13_C"/>
</dbReference>
<dbReference type="InterPro" id="IPR001892">
    <property type="entry name" value="Ribosomal_uS13"/>
</dbReference>
<dbReference type="InterPro" id="IPR010979">
    <property type="entry name" value="Ribosomal_uS13-like_H2TH"/>
</dbReference>
<dbReference type="InterPro" id="IPR018269">
    <property type="entry name" value="Ribosomal_uS13_CS"/>
</dbReference>
<dbReference type="NCBIfam" id="NF003140">
    <property type="entry name" value="PRK04053.1"/>
    <property type="match status" value="1"/>
</dbReference>
<dbReference type="PANTHER" id="PTHR10871">
    <property type="entry name" value="30S RIBOSOMAL PROTEIN S13/40S RIBOSOMAL PROTEIN S18"/>
    <property type="match status" value="1"/>
</dbReference>
<dbReference type="PANTHER" id="PTHR10871:SF3">
    <property type="entry name" value="SMALL RIBOSOMAL SUBUNIT PROTEIN US13"/>
    <property type="match status" value="1"/>
</dbReference>
<dbReference type="Pfam" id="PF00416">
    <property type="entry name" value="Ribosomal_S13"/>
    <property type="match status" value="1"/>
</dbReference>
<dbReference type="PIRSF" id="PIRSF002134">
    <property type="entry name" value="Ribosomal_S13"/>
    <property type="match status" value="1"/>
</dbReference>
<dbReference type="SUPFAM" id="SSF46946">
    <property type="entry name" value="S13-like H2TH domain"/>
    <property type="match status" value="1"/>
</dbReference>
<dbReference type="PROSITE" id="PS00646">
    <property type="entry name" value="RIBOSOMAL_S13_1"/>
    <property type="match status" value="1"/>
</dbReference>
<dbReference type="PROSITE" id="PS50159">
    <property type="entry name" value="RIBOSOMAL_S13_2"/>
    <property type="match status" value="1"/>
</dbReference>
<comment type="function">
    <text evidence="1 2">Component of the small ribosomal subunit. The ribosome is a large ribonucleoprotein complex responsible for the synthesis of proteins in the cell (By similarity). Plays an essential role in early embryonic development (PubMed:12006978).</text>
</comment>
<comment type="subunit">
    <text evidence="1">Component of the small ribosomal subunit.</text>
</comment>
<comment type="subcellular location">
    <subcellularLocation>
        <location evidence="1">Cytoplasm</location>
    </subcellularLocation>
</comment>
<comment type="disruption phenotype">
    <text evidence="2">Embryos have a reduced forebrain, kinked tail and inflated hindbrain ventricle.</text>
</comment>
<comment type="similarity">
    <text evidence="3">Belongs to the universal ribosomal protein uS13 family.</text>
</comment>
<accession>Q8JGS9</accession>
<accession>Q9IAC0</accession>
<gene>
    <name type="primary">rps18</name>
    <name type="synonym">ke3</name>
</gene>
<organism>
    <name type="scientific">Danio rerio</name>
    <name type="common">Zebrafish</name>
    <name type="synonym">Brachydanio rerio</name>
    <dbReference type="NCBI Taxonomy" id="7955"/>
    <lineage>
        <taxon>Eukaryota</taxon>
        <taxon>Metazoa</taxon>
        <taxon>Chordata</taxon>
        <taxon>Craniata</taxon>
        <taxon>Vertebrata</taxon>
        <taxon>Euteleostomi</taxon>
        <taxon>Actinopterygii</taxon>
        <taxon>Neopterygii</taxon>
        <taxon>Teleostei</taxon>
        <taxon>Ostariophysi</taxon>
        <taxon>Cypriniformes</taxon>
        <taxon>Danionidae</taxon>
        <taxon>Danioninae</taxon>
        <taxon>Danio</taxon>
    </lineage>
</organism>
<evidence type="ECO:0000250" key="1">
    <source>
        <dbReference type="UniProtKB" id="P62269"/>
    </source>
</evidence>
<evidence type="ECO:0000269" key="2">
    <source>
    </source>
</evidence>
<evidence type="ECO:0000305" key="3"/>